<sequence>MSITSEKKKSLMNIYAIKEDDTGSSFVQCAILTERISNLTEHFKVHKHDHHSKRGLLILIGRRRKHLNYIKRKFGNEAYQELIEKLGIRK</sequence>
<gene>
    <name evidence="1" type="primary">rpsO</name>
    <name type="ordered locus">WD_0905</name>
</gene>
<protein>
    <recommendedName>
        <fullName evidence="1">Small ribosomal subunit protein uS15</fullName>
    </recommendedName>
    <alternativeName>
        <fullName evidence="2">30S ribosomal protein S15</fullName>
    </alternativeName>
</protein>
<keyword id="KW-0687">Ribonucleoprotein</keyword>
<keyword id="KW-0689">Ribosomal protein</keyword>
<keyword id="KW-0694">RNA-binding</keyword>
<keyword id="KW-0699">rRNA-binding</keyword>
<evidence type="ECO:0000255" key="1">
    <source>
        <dbReference type="HAMAP-Rule" id="MF_01343"/>
    </source>
</evidence>
<evidence type="ECO:0000305" key="2"/>
<name>RS15_WOLPM</name>
<organism>
    <name type="scientific">Wolbachia pipientis wMel</name>
    <dbReference type="NCBI Taxonomy" id="163164"/>
    <lineage>
        <taxon>Bacteria</taxon>
        <taxon>Pseudomonadati</taxon>
        <taxon>Pseudomonadota</taxon>
        <taxon>Alphaproteobacteria</taxon>
        <taxon>Rickettsiales</taxon>
        <taxon>Anaplasmataceae</taxon>
        <taxon>Wolbachieae</taxon>
        <taxon>Wolbachia</taxon>
    </lineage>
</organism>
<accession>Q73GN5</accession>
<proteinExistence type="inferred from homology"/>
<feature type="chain" id="PRO_0000115587" description="Small ribosomal subunit protein uS15">
    <location>
        <begin position="1"/>
        <end position="90"/>
    </location>
</feature>
<dbReference type="EMBL" id="AE017196">
    <property type="protein sequence ID" value="AAS14581.1"/>
    <property type="molecule type" value="Genomic_DNA"/>
</dbReference>
<dbReference type="RefSeq" id="WP_010962917.1">
    <property type="nucleotide sequence ID" value="NZ_OX384529.1"/>
</dbReference>
<dbReference type="SMR" id="Q73GN5"/>
<dbReference type="EnsemblBacteria" id="AAS14581">
    <property type="protein sequence ID" value="AAS14581"/>
    <property type="gene ID" value="WD_0905"/>
</dbReference>
<dbReference type="GeneID" id="70036381"/>
<dbReference type="KEGG" id="wol:WD_0905"/>
<dbReference type="eggNOG" id="COG0184">
    <property type="taxonomic scope" value="Bacteria"/>
</dbReference>
<dbReference type="Proteomes" id="UP000008215">
    <property type="component" value="Chromosome"/>
</dbReference>
<dbReference type="GO" id="GO:0022627">
    <property type="term" value="C:cytosolic small ribosomal subunit"/>
    <property type="evidence" value="ECO:0007669"/>
    <property type="project" value="TreeGrafter"/>
</dbReference>
<dbReference type="GO" id="GO:0019843">
    <property type="term" value="F:rRNA binding"/>
    <property type="evidence" value="ECO:0007669"/>
    <property type="project" value="UniProtKB-UniRule"/>
</dbReference>
<dbReference type="GO" id="GO:0003735">
    <property type="term" value="F:structural constituent of ribosome"/>
    <property type="evidence" value="ECO:0007669"/>
    <property type="project" value="InterPro"/>
</dbReference>
<dbReference type="GO" id="GO:0006412">
    <property type="term" value="P:translation"/>
    <property type="evidence" value="ECO:0007669"/>
    <property type="project" value="UniProtKB-UniRule"/>
</dbReference>
<dbReference type="CDD" id="cd00353">
    <property type="entry name" value="Ribosomal_S15p_S13e"/>
    <property type="match status" value="1"/>
</dbReference>
<dbReference type="FunFam" id="1.10.287.10:FF:000002">
    <property type="entry name" value="30S ribosomal protein S15"/>
    <property type="match status" value="1"/>
</dbReference>
<dbReference type="Gene3D" id="6.10.250.3130">
    <property type="match status" value="1"/>
</dbReference>
<dbReference type="Gene3D" id="1.10.287.10">
    <property type="entry name" value="S15/NS1, RNA-binding"/>
    <property type="match status" value="1"/>
</dbReference>
<dbReference type="HAMAP" id="MF_01343_B">
    <property type="entry name" value="Ribosomal_uS15_B"/>
    <property type="match status" value="1"/>
</dbReference>
<dbReference type="InterPro" id="IPR000589">
    <property type="entry name" value="Ribosomal_uS15"/>
</dbReference>
<dbReference type="InterPro" id="IPR005290">
    <property type="entry name" value="Ribosomal_uS15_bac-type"/>
</dbReference>
<dbReference type="InterPro" id="IPR009068">
    <property type="entry name" value="uS15_NS1_RNA-bd_sf"/>
</dbReference>
<dbReference type="NCBIfam" id="TIGR00952">
    <property type="entry name" value="S15_bact"/>
    <property type="match status" value="1"/>
</dbReference>
<dbReference type="PANTHER" id="PTHR23321">
    <property type="entry name" value="RIBOSOMAL PROTEIN S15, BACTERIAL AND ORGANELLAR"/>
    <property type="match status" value="1"/>
</dbReference>
<dbReference type="PANTHER" id="PTHR23321:SF26">
    <property type="entry name" value="SMALL RIBOSOMAL SUBUNIT PROTEIN US15M"/>
    <property type="match status" value="1"/>
</dbReference>
<dbReference type="Pfam" id="PF00312">
    <property type="entry name" value="Ribosomal_S15"/>
    <property type="match status" value="1"/>
</dbReference>
<dbReference type="SMART" id="SM01387">
    <property type="entry name" value="Ribosomal_S15"/>
    <property type="match status" value="1"/>
</dbReference>
<dbReference type="SUPFAM" id="SSF47060">
    <property type="entry name" value="S15/NS1 RNA-binding domain"/>
    <property type="match status" value="1"/>
</dbReference>
<reference key="1">
    <citation type="journal article" date="2004" name="PLoS Biol.">
        <title>Phylogenomics of the reproductive parasite Wolbachia pipientis wMel: a streamlined genome overrun by mobile genetic elements.</title>
        <authorList>
            <person name="Wu M."/>
            <person name="Sun L.V."/>
            <person name="Vamathevan J.J."/>
            <person name="Riegler M."/>
            <person name="DeBoy R.T."/>
            <person name="Brownlie J.C."/>
            <person name="McGraw E.A."/>
            <person name="Martin W."/>
            <person name="Esser C."/>
            <person name="Ahmadinejad N."/>
            <person name="Wiegand C."/>
            <person name="Madupu R."/>
            <person name="Beanan M.J."/>
            <person name="Brinkac L.M."/>
            <person name="Daugherty S.C."/>
            <person name="Durkin A.S."/>
            <person name="Kolonay J.F."/>
            <person name="Nelson W.C."/>
            <person name="Mohamoud Y."/>
            <person name="Lee P."/>
            <person name="Berry K.J."/>
            <person name="Young M.B."/>
            <person name="Utterback T.R."/>
            <person name="Weidman J.F."/>
            <person name="Nierman W.C."/>
            <person name="Paulsen I.T."/>
            <person name="Nelson K.E."/>
            <person name="Tettelin H."/>
            <person name="O'Neill S.L."/>
            <person name="Eisen J.A."/>
        </authorList>
    </citation>
    <scope>NUCLEOTIDE SEQUENCE [LARGE SCALE GENOMIC DNA]</scope>
</reference>
<comment type="function">
    <text evidence="1">One of the primary rRNA binding proteins, it binds directly to 16S rRNA where it helps nucleate assembly of the platform of the 30S subunit by binding and bridging several RNA helices of the 16S rRNA.</text>
</comment>
<comment type="function">
    <text evidence="1">Forms an intersubunit bridge (bridge B4) with the 23S rRNA of the 50S subunit in the ribosome.</text>
</comment>
<comment type="subunit">
    <text evidence="1">Part of the 30S ribosomal subunit. Forms a bridge to the 50S subunit in the 70S ribosome, contacting the 23S rRNA.</text>
</comment>
<comment type="similarity">
    <text evidence="1">Belongs to the universal ribosomal protein uS15 family.</text>
</comment>